<dbReference type="EC" id="2.3.1.294" evidence="14 15"/>
<dbReference type="EMBL" id="AL123456">
    <property type="protein sequence ID" value="CCP45026.1"/>
    <property type="status" value="ALT_INIT"/>
    <property type="molecule type" value="Genomic_DNA"/>
</dbReference>
<dbReference type="PIR" id="B70779">
    <property type="entry name" value="B70779"/>
</dbReference>
<dbReference type="RefSeq" id="NP_216762.1">
    <property type="nucleotide sequence ID" value="NC_000962.3"/>
</dbReference>
<dbReference type="RefSeq" id="WP_003411576.1">
    <property type="nucleotide sequence ID" value="NZ_NVQJ01000008.1"/>
</dbReference>
<dbReference type="RefSeq" id="WP_003899231.1">
    <property type="nucleotide sequence ID" value="NC_000962.3"/>
</dbReference>
<dbReference type="PDB" id="2GP6">
    <property type="method" value="X-ray"/>
    <property type="resolution" value="2.40 A"/>
    <property type="chains" value="A/B=5-417"/>
</dbReference>
<dbReference type="PDBsum" id="2GP6"/>
<dbReference type="SMR" id="P9WQD7"/>
<dbReference type="FunCoup" id="P9WQD7">
    <property type="interactions" value="428"/>
</dbReference>
<dbReference type="STRING" id="83332.Rv2246"/>
<dbReference type="BindingDB" id="P9WQD7"/>
<dbReference type="ChEMBL" id="CHEMBL4543"/>
<dbReference type="SwissLipids" id="SLP:000000963"/>
<dbReference type="iPTMnet" id="P9WQD7"/>
<dbReference type="PaxDb" id="83332-Rv2246"/>
<dbReference type="DNASU" id="887539"/>
<dbReference type="GeneID" id="45426226"/>
<dbReference type="GeneID" id="887539"/>
<dbReference type="KEGG" id="mtu:Rv2246"/>
<dbReference type="PATRIC" id="fig|83332.12.peg.2504"/>
<dbReference type="TubercuList" id="Rv2246"/>
<dbReference type="eggNOG" id="COG0304">
    <property type="taxonomic scope" value="Bacteria"/>
</dbReference>
<dbReference type="InParanoid" id="P9WQD7"/>
<dbReference type="OrthoDB" id="9808669at2"/>
<dbReference type="BioCyc" id="MetaCyc:G185E-6462-MONOMER"/>
<dbReference type="SABIO-RK" id="P9WQD7"/>
<dbReference type="UniPathway" id="UPA00915"/>
<dbReference type="EvolutionaryTrace" id="P9WQD7"/>
<dbReference type="PRO" id="PR:P9WQD7"/>
<dbReference type="Proteomes" id="UP000001584">
    <property type="component" value="Chromosome"/>
</dbReference>
<dbReference type="GO" id="GO:0005829">
    <property type="term" value="C:cytosol"/>
    <property type="evidence" value="ECO:0000318"/>
    <property type="project" value="GO_Central"/>
</dbReference>
<dbReference type="GO" id="GO:0009274">
    <property type="term" value="C:peptidoglycan-based cell wall"/>
    <property type="evidence" value="ECO:0007005"/>
    <property type="project" value="MTBBASE"/>
</dbReference>
<dbReference type="GO" id="GO:0005886">
    <property type="term" value="C:plasma membrane"/>
    <property type="evidence" value="ECO:0007005"/>
    <property type="project" value="MTBBASE"/>
</dbReference>
<dbReference type="GO" id="GO:0004315">
    <property type="term" value="F:3-oxoacyl-[acyl-carrier-protein] synthase activity"/>
    <property type="evidence" value="ECO:0000314"/>
    <property type="project" value="MTBBASE"/>
</dbReference>
<dbReference type="GO" id="GO:0006633">
    <property type="term" value="P:fatty acid biosynthetic process"/>
    <property type="evidence" value="ECO:0000318"/>
    <property type="project" value="GO_Central"/>
</dbReference>
<dbReference type="GO" id="GO:0030497">
    <property type="term" value="P:fatty acid elongation"/>
    <property type="evidence" value="ECO:0000314"/>
    <property type="project" value="MTBBASE"/>
</dbReference>
<dbReference type="GO" id="GO:0071768">
    <property type="term" value="P:mycolic acid biosynthetic process"/>
    <property type="evidence" value="ECO:0000315"/>
    <property type="project" value="MTBBASE"/>
</dbReference>
<dbReference type="GO" id="GO:0001666">
    <property type="term" value="P:response to hypoxia"/>
    <property type="evidence" value="ECO:0000270"/>
    <property type="project" value="MTBBASE"/>
</dbReference>
<dbReference type="CDD" id="cd00834">
    <property type="entry name" value="KAS_I_II"/>
    <property type="match status" value="1"/>
</dbReference>
<dbReference type="FunFam" id="3.40.47.10:FF:000029">
    <property type="entry name" value="3-oxoacyl-[acyl-carrier-protein] synthase 1"/>
    <property type="match status" value="1"/>
</dbReference>
<dbReference type="FunFam" id="3.40.47.10:FF:000018">
    <property type="entry name" value="3-oxoacyl-[acyl-carrier-protein] synthase 2"/>
    <property type="match status" value="1"/>
</dbReference>
<dbReference type="Gene3D" id="3.40.47.10">
    <property type="match status" value="2"/>
</dbReference>
<dbReference type="InterPro" id="IPR000794">
    <property type="entry name" value="Beta-ketoacyl_synthase"/>
</dbReference>
<dbReference type="InterPro" id="IPR014031">
    <property type="entry name" value="Ketoacyl_synth_C"/>
</dbReference>
<dbReference type="InterPro" id="IPR014030">
    <property type="entry name" value="Ketoacyl_synth_N"/>
</dbReference>
<dbReference type="InterPro" id="IPR020841">
    <property type="entry name" value="PKS_Beta-ketoAc_synthase_dom"/>
</dbReference>
<dbReference type="InterPro" id="IPR016039">
    <property type="entry name" value="Thiolase-like"/>
</dbReference>
<dbReference type="NCBIfam" id="NF005589">
    <property type="entry name" value="PRK07314.1"/>
    <property type="match status" value="1"/>
</dbReference>
<dbReference type="NCBIfam" id="NF005916">
    <property type="entry name" value="PRK07910.1"/>
    <property type="match status" value="1"/>
</dbReference>
<dbReference type="PANTHER" id="PTHR11712:SF336">
    <property type="entry name" value="3-OXOACYL-[ACYL-CARRIER-PROTEIN] SYNTHASE, MITOCHONDRIAL"/>
    <property type="match status" value="1"/>
</dbReference>
<dbReference type="PANTHER" id="PTHR11712">
    <property type="entry name" value="POLYKETIDE SYNTHASE-RELATED"/>
    <property type="match status" value="1"/>
</dbReference>
<dbReference type="Pfam" id="PF00109">
    <property type="entry name" value="ketoacyl-synt"/>
    <property type="match status" value="1"/>
</dbReference>
<dbReference type="Pfam" id="PF02801">
    <property type="entry name" value="Ketoacyl-synt_C"/>
    <property type="match status" value="1"/>
</dbReference>
<dbReference type="SMART" id="SM00825">
    <property type="entry name" value="PKS_KS"/>
    <property type="match status" value="1"/>
</dbReference>
<dbReference type="SUPFAM" id="SSF53901">
    <property type="entry name" value="Thiolase-like"/>
    <property type="match status" value="2"/>
</dbReference>
<dbReference type="PROSITE" id="PS52004">
    <property type="entry name" value="KS3_2"/>
    <property type="match status" value="1"/>
</dbReference>
<reference key="1">
    <citation type="journal article" date="1998" name="Nature">
        <title>Deciphering the biology of Mycobacterium tuberculosis from the complete genome sequence.</title>
        <authorList>
            <person name="Cole S.T."/>
            <person name="Brosch R."/>
            <person name="Parkhill J."/>
            <person name="Garnier T."/>
            <person name="Churcher C.M."/>
            <person name="Harris D.E."/>
            <person name="Gordon S.V."/>
            <person name="Eiglmeier K."/>
            <person name="Gas S."/>
            <person name="Barry C.E. III"/>
            <person name="Tekaia F."/>
            <person name="Badcock K."/>
            <person name="Basham D."/>
            <person name="Brown D."/>
            <person name="Chillingworth T."/>
            <person name="Connor R."/>
            <person name="Davies R.M."/>
            <person name="Devlin K."/>
            <person name="Feltwell T."/>
            <person name="Gentles S."/>
            <person name="Hamlin N."/>
            <person name="Holroyd S."/>
            <person name="Hornsby T."/>
            <person name="Jagels K."/>
            <person name="Krogh A."/>
            <person name="McLean J."/>
            <person name="Moule S."/>
            <person name="Murphy L.D."/>
            <person name="Oliver S."/>
            <person name="Osborne J."/>
            <person name="Quail M.A."/>
            <person name="Rajandream M.A."/>
            <person name="Rogers J."/>
            <person name="Rutter S."/>
            <person name="Seeger K."/>
            <person name="Skelton S."/>
            <person name="Squares S."/>
            <person name="Squares R."/>
            <person name="Sulston J.E."/>
            <person name="Taylor K."/>
            <person name="Whitehead S."/>
            <person name="Barrell B.G."/>
        </authorList>
    </citation>
    <scope>NUCLEOTIDE SEQUENCE [LARGE SCALE GENOMIC DNA]</scope>
    <source>
        <strain>ATCC 25618 / H37Rv</strain>
    </source>
</reference>
<reference key="2">
    <citation type="journal article" date="2000" name="J. Biol. Chem.">
        <title>Thiolactomycin and related analogues as novel anti-mycobacterial agents targeting KasA and KasB condensing enzymes in Mycobacterium tuberculosis.</title>
        <authorList>
            <person name="Kremer L."/>
            <person name="Douglas J.D."/>
            <person name="Baulard A.R."/>
            <person name="Morehouse C."/>
            <person name="Guy M.R."/>
            <person name="Alland D."/>
            <person name="Dover L.G."/>
            <person name="Lakey J.H."/>
            <person name="Jacobs W.R. Jr."/>
            <person name="Brennan P.J."/>
            <person name="Minnikin D.E."/>
            <person name="Besra G.S."/>
        </authorList>
    </citation>
    <scope>IDENTIFICATION AS A DRUG TARGET</scope>
</reference>
<reference key="3">
    <citation type="journal article" date="2001" name="J. Biol. Chem.">
        <title>Purification and biochemical characterization of the Mycobacterium tuberculosis beta-ketoacyl-acyl carrier protein synthases KasA and KasB.</title>
        <authorList>
            <person name="Schaeffer M.L."/>
            <person name="Agnihotri G."/>
            <person name="Volker C."/>
            <person name="Kallender H."/>
            <person name="Brennan P.J."/>
            <person name="Lonsdale J.T."/>
        </authorList>
    </citation>
    <scope>FUNCTION</scope>
    <scope>CATALYTIC ACTIVITY</scope>
    <scope>BIOPHYSICOCHEMICAL PROPERTIES</scope>
    <scope>PATHWAY</scope>
</reference>
<reference key="4">
    <citation type="journal article" date="2002" name="Tuberculosis">
        <title>The role of KasA and KasB in the biosynthesis of meromycolic acids and isoniazid resistance in Mycobacterium tuberculosis.</title>
        <authorList>
            <person name="Slayden R.A."/>
            <person name="Barry C.E. III"/>
        </authorList>
    </citation>
    <scope>FUNCTION</scope>
    <scope>CATALYTIC ACTIVITY</scope>
    <scope>PATHWAY</scope>
</reference>
<reference key="5">
    <citation type="journal article" date="2003" name="Mol. Microbiol.">
        <title>Requirement for kasB in Mycobacterium mycolic acid biosynthesis, cell wall impermeability and intracellular survival: implications for therapy.</title>
        <authorList>
            <person name="Gao L.Y."/>
            <person name="Laval F."/>
            <person name="Lawson E.H."/>
            <person name="Groger R.K."/>
            <person name="Woodruff A."/>
            <person name="Morisaki J.H."/>
            <person name="Cox J.S."/>
            <person name="Daffe M."/>
            <person name="Brown E.J."/>
        </authorList>
    </citation>
    <scope>FUNCTION IN VIRULENCE</scope>
    <scope>PATHWAY</scope>
    <scope>DISRUPTION PHENOTYPE</scope>
    <scope>IDENTIFICATION AS A DRUG TARGET</scope>
</reference>
<reference key="6">
    <citation type="journal article" date="2006" name="J. Biol. Chem.">
        <title>The condensing activities of the Mycobacterium tuberculosis type II fatty acid synthase are differentially regulated by phosphorylation.</title>
        <authorList>
            <person name="Molle V."/>
            <person name="Brown A.K."/>
            <person name="Besra G.S."/>
            <person name="Cozzone A.J."/>
            <person name="Kremer L."/>
        </authorList>
    </citation>
    <scope>FUNCTION</scope>
    <scope>CATALYTIC ACTIVITY</scope>
    <scope>BIOPHYSICOCHEMICAL PROPERTIES</scope>
    <scope>PHOSPHORYLATION</scope>
</reference>
<reference key="7">
    <citation type="journal article" date="2007" name="Proc. Natl. Acad. Sci. U.S.A.">
        <title>Deletion of kasB in Mycobacterium tuberculosis causes loss of acid-fastness and subclinical latent tuberculosis in immunocompetent mice.</title>
        <authorList>
            <person name="Bhatt A."/>
            <person name="Fujiwara N."/>
            <person name="Bhatt K."/>
            <person name="Gurcha S.S."/>
            <person name="Kremer L."/>
            <person name="Chen B."/>
            <person name="Chan J."/>
            <person name="Porcelli S.A."/>
            <person name="Kobayashi K."/>
            <person name="Besra G.S."/>
            <person name="Jacobs W.R. Jr."/>
        </authorList>
    </citation>
    <scope>DISRUPTION PHENOTYPE</scope>
    <scope>PATHWAY</scope>
</reference>
<reference key="8">
    <citation type="journal article" date="2011" name="Mol. Cell. Proteomics">
        <title>Proteogenomic analysis of Mycobacterium tuberculosis by high resolution mass spectrometry.</title>
        <authorList>
            <person name="Kelkar D.S."/>
            <person name="Kumar D."/>
            <person name="Kumar P."/>
            <person name="Balakrishnan L."/>
            <person name="Muthusamy B."/>
            <person name="Yadav A.K."/>
            <person name="Shrivastava P."/>
            <person name="Marimuthu A."/>
            <person name="Anand S."/>
            <person name="Sundaram H."/>
            <person name="Kingsbury R."/>
            <person name="Harsha H.C."/>
            <person name="Nair B."/>
            <person name="Prasad T.S."/>
            <person name="Chauhan D.S."/>
            <person name="Katoch K."/>
            <person name="Katoch V.M."/>
            <person name="Kumar P."/>
            <person name="Chaerkady R."/>
            <person name="Ramachandran S."/>
            <person name="Dash D."/>
            <person name="Pandey A."/>
        </authorList>
    </citation>
    <scope>IDENTIFICATION BY MASS SPECTROMETRY [LARGE SCALE ANALYSIS]</scope>
    <source>
        <strain>ATCC 25618 / H37Rv</strain>
    </source>
</reference>
<reference key="9">
    <citation type="journal article" date="2012" name="Tuberculosis">
        <title>Non-acid-fastness in Mycobacterium tuberculosis DeltakasB mutant correlates with the cell envelope electron density.</title>
        <authorList>
            <person name="Yamada H."/>
            <person name="Bhatt A."/>
            <person name="Danev R."/>
            <person name="Fujiwara N."/>
            <person name="Maeda S."/>
            <person name="Mitarai S."/>
            <person name="Chikamatsu K."/>
            <person name="Aono A."/>
            <person name="Nitta K."/>
            <person name="Jacobs W.R. Jr."/>
            <person name="Nagayama K."/>
        </authorList>
    </citation>
    <scope>DISRUPTION PHENOTYPE</scope>
    <scope>PATHWAY</scope>
</reference>
<reference key="10">
    <citation type="journal article" date="2014" name="PLoS Pathog.">
        <title>Phosphorylation of KasB regulates virulence and acid-fastness in Mycobacterium tuberculosis.</title>
        <authorList>
            <person name="Vilcheze C."/>
            <person name="Molle V."/>
            <person name="Carrere-Kremer S."/>
            <person name="Leiba J."/>
            <person name="Mourey L."/>
            <person name="Shenai S."/>
            <person name="Baronian G."/>
            <person name="Tufariello J."/>
            <person name="Hartman T."/>
            <person name="Veyron-Churlet R."/>
            <person name="Trivelli X."/>
            <person name="Tiwari S."/>
            <person name="Weinrick B."/>
            <person name="Alland D."/>
            <person name="Guerardel Y."/>
            <person name="Jacobs W.R. Jr."/>
            <person name="Kremer L."/>
        </authorList>
    </citation>
    <scope>PHOSPHORYLATION AT THR-313 AND THR-315</scope>
    <scope>ACTIVITY REGULATION</scope>
    <scope>MUTAGENESIS OF THR-313 AND THR-315</scope>
</reference>
<reference evidence="16" key="11">
    <citation type="journal article" date="2007" name="J. Mol. Biol.">
        <title>X-ray crystal structure of Mycobacterium tuberculosis beta-ketoacyl acyl carrier protein synthase II (mtKasB).</title>
        <authorList>
            <person name="Sridharan S."/>
            <person name="Wang L."/>
            <person name="Brown A.K."/>
            <person name="Dover L.G."/>
            <person name="Kremer L."/>
            <person name="Besra G.S."/>
            <person name="Sacchettini J.C."/>
        </authorList>
    </citation>
    <scope>X-RAY CRYSTALLOGRAPHY (2.40 ANGSTROMS) OF 5-417</scope>
    <scope>SUBUNIT</scope>
</reference>
<name>KASB_MYCTU</name>
<feature type="chain" id="PRO_0000180334" description="3-oxoacyl-[acyl-carrier-protein] synthase 2">
    <location>
        <begin position="1"/>
        <end position="417"/>
    </location>
</feature>
<feature type="domain" description="Ketosynthase family 3 (KS3)" evidence="1">
    <location>
        <begin position="10"/>
        <end position="416"/>
    </location>
</feature>
<feature type="active site" description="For beta-ketoacyl synthase activity" evidence="1">
    <location>
        <position position="170"/>
    </location>
</feature>
<feature type="active site" description="For beta-ketoacyl synthase activity" evidence="1">
    <location>
        <position position="311"/>
    </location>
</feature>
<feature type="active site" description="For beta-ketoacyl synthase activity" evidence="1">
    <location>
        <position position="346"/>
    </location>
</feature>
<feature type="modified residue" description="Phosphothreonine" evidence="10">
    <location>
        <position position="313"/>
    </location>
</feature>
<feature type="modified residue" description="Phosphothreonine" evidence="10">
    <location>
        <position position="315"/>
    </location>
</feature>
<feature type="mutagenesis site" description="Decreases phosphorylation. Lack of phosphorylation; when associated with A-315." evidence="10">
    <original>T</original>
    <variation>A</variation>
    <location>
        <position position="313"/>
    </location>
</feature>
<feature type="mutagenesis site" description="Phosphomimetic mutant. Loss of acid-fast staining and reduced pathogenicity; when associated with D-315." evidence="10">
    <original>T</original>
    <variation>D</variation>
    <location>
        <position position="313"/>
    </location>
</feature>
<feature type="mutagenesis site" description="Decreases phosphorylation. Lack of phosphorylation; when associated with A-313." evidence="10">
    <original>T</original>
    <variation>A</variation>
    <location>
        <position position="315"/>
    </location>
</feature>
<feature type="mutagenesis site" description="Phosphomimetic mutant. Loss of acid-fast staining and reduced pathogenicity; when associated with D-313." evidence="10">
    <original>T</original>
    <variation>D</variation>
    <location>
        <position position="315"/>
    </location>
</feature>
<feature type="turn" evidence="17">
    <location>
        <begin position="6"/>
        <end position="9"/>
    </location>
</feature>
<feature type="strand" evidence="17">
    <location>
        <begin position="13"/>
        <end position="21"/>
    </location>
</feature>
<feature type="helix" evidence="17">
    <location>
        <begin position="28"/>
        <end position="36"/>
    </location>
</feature>
<feature type="strand" evidence="17">
    <location>
        <begin position="42"/>
        <end position="44"/>
    </location>
</feature>
<feature type="helix" evidence="17">
    <location>
        <begin position="48"/>
        <end position="53"/>
    </location>
</feature>
<feature type="strand" evidence="17">
    <location>
        <begin position="59"/>
        <end position="61"/>
    </location>
</feature>
<feature type="helix" evidence="17">
    <location>
        <begin position="73"/>
        <end position="77"/>
    </location>
</feature>
<feature type="helix" evidence="17">
    <location>
        <begin position="81"/>
        <end position="96"/>
    </location>
</feature>
<feature type="strand" evidence="17">
    <location>
        <begin position="106"/>
        <end position="112"/>
    </location>
</feature>
<feature type="helix" evidence="17">
    <location>
        <begin position="119"/>
        <end position="128"/>
    </location>
</feature>
<feature type="strand" evidence="17">
    <location>
        <begin position="133"/>
        <end position="136"/>
    </location>
</feature>
<feature type="helix" evidence="17">
    <location>
        <begin position="140"/>
        <end position="144"/>
    </location>
</feature>
<feature type="helix" evidence="17">
    <location>
        <begin position="148"/>
        <end position="156"/>
    </location>
</feature>
<feature type="helix" evidence="17">
    <location>
        <begin position="169"/>
        <end position="171"/>
    </location>
</feature>
<feature type="helix" evidence="17">
    <location>
        <begin position="172"/>
        <end position="185"/>
    </location>
</feature>
<feature type="strand" evidence="17">
    <location>
        <begin position="190"/>
        <end position="197"/>
    </location>
</feature>
<feature type="helix" evidence="17">
    <location>
        <begin position="203"/>
        <end position="210"/>
    </location>
</feature>
<feature type="turn" evidence="17">
    <location>
        <begin position="211"/>
        <end position="213"/>
    </location>
</feature>
<feature type="turn" evidence="17">
    <location>
        <begin position="223"/>
        <end position="225"/>
    </location>
</feature>
<feature type="strand" evidence="17">
    <location>
        <begin position="229"/>
        <end position="231"/>
    </location>
</feature>
<feature type="strand" evidence="17">
    <location>
        <begin position="243"/>
        <end position="250"/>
    </location>
</feature>
<feature type="helix" evidence="17">
    <location>
        <begin position="251"/>
        <end position="255"/>
    </location>
</feature>
<feature type="turn" evidence="17">
    <location>
        <begin position="256"/>
        <end position="258"/>
    </location>
</feature>
<feature type="strand" evidence="17">
    <location>
        <begin position="263"/>
        <end position="272"/>
    </location>
</feature>
<feature type="strand" evidence="17">
    <location>
        <begin position="277"/>
        <end position="279"/>
    </location>
</feature>
<feature type="helix" evidence="17">
    <location>
        <begin position="285"/>
        <end position="297"/>
    </location>
</feature>
<feature type="turn" evidence="17">
    <location>
        <begin position="302"/>
        <end position="304"/>
    </location>
</feature>
<feature type="strand" evidence="17">
    <location>
        <begin position="305"/>
        <end position="309"/>
    </location>
</feature>
<feature type="helix" evidence="17">
    <location>
        <begin position="316"/>
        <end position="330"/>
    </location>
</feature>
<feature type="helix" evidence="17">
    <location>
        <begin position="341"/>
        <end position="344"/>
    </location>
</feature>
<feature type="turn" evidence="17">
    <location>
        <begin position="348"/>
        <end position="350"/>
    </location>
</feature>
<feature type="helix" evidence="17">
    <location>
        <begin position="351"/>
        <end position="365"/>
    </location>
</feature>
<feature type="strand" evidence="17">
    <location>
        <begin position="375"/>
        <end position="377"/>
    </location>
</feature>
<feature type="strand" evidence="17">
    <location>
        <begin position="397"/>
        <end position="404"/>
    </location>
</feature>
<feature type="turn" evidence="17">
    <location>
        <begin position="405"/>
        <end position="407"/>
    </location>
</feature>
<feature type="strand" evidence="17">
    <location>
        <begin position="408"/>
        <end position="415"/>
    </location>
</feature>
<keyword id="KW-0002">3D-structure</keyword>
<keyword id="KW-0012">Acyltransferase</keyword>
<keyword id="KW-0963">Cytoplasm</keyword>
<keyword id="KW-0275">Fatty acid biosynthesis</keyword>
<keyword id="KW-0276">Fatty acid metabolism</keyword>
<keyword id="KW-0444">Lipid biosynthesis</keyword>
<keyword id="KW-0443">Lipid metabolism</keyword>
<keyword id="KW-0597">Phosphoprotein</keyword>
<keyword id="KW-1185">Reference proteome</keyword>
<keyword id="KW-0808">Transferase</keyword>
<gene>
    <name evidence="11" type="primary">kasB</name>
    <name type="ordered locus">Rv2246</name>
    <name type="ORF">MTCY427.27</name>
</gene>
<accession>P9WQD7</accession>
<accession>L0TBY1</accession>
<accession>P63456</accession>
<accession>Q10525</accession>
<proteinExistence type="evidence at protein level"/>
<organism>
    <name type="scientific">Mycobacterium tuberculosis (strain ATCC 25618 / H37Rv)</name>
    <dbReference type="NCBI Taxonomy" id="83332"/>
    <lineage>
        <taxon>Bacteria</taxon>
        <taxon>Bacillati</taxon>
        <taxon>Actinomycetota</taxon>
        <taxon>Actinomycetes</taxon>
        <taxon>Mycobacteriales</taxon>
        <taxon>Mycobacteriaceae</taxon>
        <taxon>Mycobacterium</taxon>
        <taxon>Mycobacterium tuberculosis complex</taxon>
    </lineage>
</organism>
<comment type="function">
    <text evidence="3 4 5 6">Part of the mycobacterial fatty acid elongation system FAS-II, which is involved in mycolic acid biosynthesis. Catalyzes the elongation of long chain acyl-ACP substrates by the addition of two carbons from malonyl-ACP to an acyl acceptor (PubMed:11600501, PubMed:12464486, PubMed:16873379). Involved in extension of the mycolate chains to full lengths and produces longer chain multiunsaturated hydrocarbons averaging 54 carbons in length (PubMed:12464486). Essential for resistance to macrophage antimicrobial activity (PubMed:12950920).</text>
</comment>
<comment type="catalytic activity">
    <reaction evidence="14 15">
        <text>an ultra-long-chain di-unsaturated fatty acyl-[ACP] + malonyl-[ACP] + H(+) = a 3-oxo-ultra-long-chain di-unsaturated fatty acyl-[ACP] + holo-[ACP] + CO2</text>
        <dbReference type="Rhea" id="RHEA:65308"/>
        <dbReference type="Rhea" id="RHEA-COMP:9623"/>
        <dbReference type="Rhea" id="RHEA-COMP:9685"/>
        <dbReference type="Rhea" id="RHEA-COMP:16767"/>
        <dbReference type="Rhea" id="RHEA-COMP:16774"/>
        <dbReference type="ChEBI" id="CHEBI:15378"/>
        <dbReference type="ChEBI" id="CHEBI:16526"/>
        <dbReference type="ChEBI" id="CHEBI:64479"/>
        <dbReference type="ChEBI" id="CHEBI:78449"/>
        <dbReference type="ChEBI" id="CHEBI:156401"/>
        <dbReference type="ChEBI" id="CHEBI:156402"/>
        <dbReference type="EC" id="2.3.1.294"/>
    </reaction>
    <physiologicalReaction direction="left-to-right" evidence="14 15">
        <dbReference type="Rhea" id="RHEA:65309"/>
    </physiologicalReaction>
</comment>
<comment type="catalytic activity">
    <reaction evidence="3 6">
        <text>hexadecanoyl-[ACP] + malonyl-[ACP] + H(+) = 3-oxooctadecanoyl-[ACP] + holo-[ACP] + CO2</text>
        <dbReference type="Rhea" id="RHEA:41916"/>
        <dbReference type="Rhea" id="RHEA-COMP:9623"/>
        <dbReference type="Rhea" id="RHEA-COMP:9652"/>
        <dbReference type="Rhea" id="RHEA-COMP:9653"/>
        <dbReference type="Rhea" id="RHEA-COMP:9685"/>
        <dbReference type="ChEBI" id="CHEBI:15378"/>
        <dbReference type="ChEBI" id="CHEBI:16526"/>
        <dbReference type="ChEBI" id="CHEBI:64479"/>
        <dbReference type="ChEBI" id="CHEBI:78449"/>
        <dbReference type="ChEBI" id="CHEBI:78483"/>
        <dbReference type="ChEBI" id="CHEBI:78487"/>
    </reaction>
    <physiologicalReaction direction="left-to-right" evidence="3 6">
        <dbReference type="Rhea" id="RHEA:41917"/>
    </physiologicalReaction>
</comment>
<comment type="activity regulation">
    <text evidence="10">Phosphorylation decreases the condensing activity of KasB and leads to the production of shorter mycolic acids, which is associated to dramatic phenotype changes, such as loss of acid-fastness, increase of cell wall permeability, severe attenuation in infected mice and defect in macrophage colonization.</text>
</comment>
<comment type="biophysicochemical properties">
    <kinetics>
        <KM evidence="3">1.4 uM for hexadecanoyl-[ACP]</KM>
        <KM evidence="6">13.1 uM for hexadecanoyl-[ACP]</KM>
        <KM evidence="3">1.9 uM for eicosanoyl-[ACP]</KM>
        <KM evidence="3">13.5 uM for malonyl-[ACP]</KM>
        <KM evidence="6">35 uM for malonyl-[ACP]</KM>
        <text evidence="3">kcat is 1.6 min(-1) with hexadecanoyl-[ACP] as substrate. kcat is 0.6 min(-1) with eicosanoyl-[ACP] as substrate. kcat is 1.4 min(-1) with malonyl-[ACP] as substrate.</text>
    </kinetics>
</comment>
<comment type="pathway">
    <text evidence="4 5 8 9 14">Lipid metabolism; mycolic acid biosynthesis.</text>
</comment>
<comment type="subunit">
    <text evidence="7">Homodimer.</text>
</comment>
<comment type="subcellular location">
    <subcellularLocation>
        <location evidence="13">Cytoplasm</location>
    </subcellularLocation>
</comment>
<comment type="PTM">
    <text evidence="6 10">Phosphorylated on Thr-313 and Thr-315 (PubMed:24809459). Phosphorylated in vitro by several Ser/Thr protein kinases (STPKs) (PubMed:16873379).</text>
</comment>
<comment type="disruption phenotype">
    <text evidence="5 8 9">Deletion of the gene results in loss of acid-fast staining, which is a simple and rapid diagnostic test for detecting M.tuberculosis (PubMed:17360388, PubMed:22516756). The region between the inner and outer membranes of the mutant, which is composed mainly of cell wall anchored mycolic acids, shows a significant decrease in electron density as compared to the wild type. It suggests that altered mycolic acids patterns in the mutant may have affected the packing of the lipid rich layer of the M.tuberculosis cell envelope, resulting in a reduced electron density of this layer and loss of acid-fastness in light microscopical observation (PubMed:22516756). Mutants synthesize mycolic acids that are 2-6 carbons shorter than wild type and show a significant reduction in the abundance of keto-mycolates (PubMed:12950920, PubMed:17360388). Deletion of the gene affects mycolic acid trans-cyclopropanation, alters the colony morphology and abolishes classic serpentine growth (PubMed:17360388). Mutants exhibit strikingly altered cell wall permeability, leading to a marked increase in susceptibility to lipophilic antibiotics and the host antimicrobial molecules defensin and lysozyme (PubMed:12950920). Deletion mutant can persist in infected immunocompetent mice for up to 600 days without causing disease or mortality (PubMed:17360388).</text>
</comment>
<comment type="miscellaneous">
    <text evidence="2 4 5">Identified as a drug target (PubMed:10747933, PubMed:12950920). Inhibited by isoniazid (INH), thiolactomycin (TLM) and related analogs (PubMed:10747933, PubMed:12464486).</text>
</comment>
<comment type="similarity">
    <text evidence="13">Belongs to the thiolase-like superfamily. Beta-ketoacyl-ACP synthases family.</text>
</comment>
<comment type="sequence caution" evidence="13">
    <conflict type="erroneous initiation">
        <sequence resource="EMBL-CDS" id="CCP45026"/>
    </conflict>
    <text>Extended N-terminus.</text>
</comment>
<evidence type="ECO:0000255" key="1">
    <source>
        <dbReference type="PROSITE-ProRule" id="PRU01348"/>
    </source>
</evidence>
<evidence type="ECO:0000269" key="2">
    <source>
    </source>
</evidence>
<evidence type="ECO:0000269" key="3">
    <source>
    </source>
</evidence>
<evidence type="ECO:0000269" key="4">
    <source>
    </source>
</evidence>
<evidence type="ECO:0000269" key="5">
    <source>
    </source>
</evidence>
<evidence type="ECO:0000269" key="6">
    <source>
    </source>
</evidence>
<evidence type="ECO:0000269" key="7">
    <source>
    </source>
</evidence>
<evidence type="ECO:0000269" key="8">
    <source>
    </source>
</evidence>
<evidence type="ECO:0000269" key="9">
    <source>
    </source>
</evidence>
<evidence type="ECO:0000269" key="10">
    <source>
    </source>
</evidence>
<evidence type="ECO:0000303" key="11">
    <source>
    </source>
</evidence>
<evidence type="ECO:0000303" key="12">
    <source>
    </source>
</evidence>
<evidence type="ECO:0000305" key="13"/>
<evidence type="ECO:0000305" key="14">
    <source>
    </source>
</evidence>
<evidence type="ECO:0000305" key="15">
    <source>
    </source>
</evidence>
<evidence type="ECO:0007744" key="16">
    <source>
        <dbReference type="PDB" id="2GP6"/>
    </source>
</evidence>
<evidence type="ECO:0007829" key="17">
    <source>
        <dbReference type="PDB" id="2GP6"/>
    </source>
</evidence>
<protein>
    <recommendedName>
        <fullName>3-oxoacyl-[acyl-carrier-protein] synthase 2</fullName>
        <ecNumber evidence="14 15">2.3.1.294</ecNumber>
    </recommendedName>
    <alternativeName>
        <fullName>Beta-ketoacyl-ACP synthase 2</fullName>
        <shortName>KAS 2</shortName>
    </alternativeName>
    <alternativeName>
        <fullName evidence="12">Beta-ketoacyl-acyl carrier protein synthase KasB</fullName>
    </alternativeName>
    <alternativeName>
        <fullName>Meromycolic acid 3-oxoacyl-(acyl carrier protein) synthase II</fullName>
    </alternativeName>
</protein>
<sequence>MTELVTGKAFPYVVVTGIAMTTALATDAETTWKLLLDRQSGIRTLDDPFVEEFDLPVRIGGHLLEEFDHQLTRIELRRMGYLQRMSTVLSRRLWENAGSPEVDTNRLMVSIGTGLGSAEELVFSYDDMRARGMKAVSPLTVQKYMPNGAAAAVGLERHAKAGVMTPVSACASGAEAIARAWQQIVLGEADAAICGGVETRIEAVPIAGFAQMRIVMSTNNDDPAGACRPFDRDRDGFVFGEGGALLLIETEEHAKARGANILARIMGASITSDGFHMVAPDPNGERAGHAITRAIQLAGLAPGDIDHVNAHATGTQVGDLAEGRAINNALGGNRPAVYAPKSALGHSVGAVGAVESILTVLALRDQVIPPTLNLVNLDPEIDLDVVAGEPRPGNYRYAINNSFGFGGHNVAIAFGRY</sequence>